<evidence type="ECO:0000250" key="1">
    <source>
        <dbReference type="UniProtKB" id="A0A0E4AZP0"/>
    </source>
</evidence>
<evidence type="ECO:0000269" key="2">
    <source>
    </source>
</evidence>
<evidence type="ECO:0000269" key="3">
    <source>
    </source>
</evidence>
<evidence type="ECO:0000303" key="4">
    <source>
    </source>
</evidence>
<evidence type="ECO:0000305" key="5"/>
<evidence type="ECO:0000305" key="6">
    <source>
    </source>
</evidence>
<accession>S4W887</accession>
<organism>
    <name type="scientific">Fusarium heterosporum</name>
    <dbReference type="NCBI Taxonomy" id="42747"/>
    <lineage>
        <taxon>Eukaryota</taxon>
        <taxon>Fungi</taxon>
        <taxon>Dikarya</taxon>
        <taxon>Ascomycota</taxon>
        <taxon>Pezizomycotina</taxon>
        <taxon>Sordariomycetes</taxon>
        <taxon>Hypocreomycetidae</taxon>
        <taxon>Hypocreales</taxon>
        <taxon>Nectriaceae</taxon>
        <taxon>Fusarium</taxon>
        <taxon>Fusarium heterosporum species complex</taxon>
    </lineage>
</organism>
<sequence length="377" mass="41224">MSNVTVSVFTLDKSISEEPVLPSSFIPSSGNVFPKFTSAIPKTAWELWYFDGISKDDRSSIVIGVTRNAEGLKHGGFKVQVFVIWADERTWHRDLFFPESVVSIDESGATEGIWKHATSSSSISFSCAGDLSKASLVFDVPGIVQGDMHLEALPGDTGLDTDATLGPSVYYVRPLGRASVKAQLSLYSSDATAAEQFILGTSANGGMDRVWSPLSWPQVMTESYYLRAQVGPYAMQIMRIFPPKGSENSENQPSTMARLYREGQLICAPQHVVTRDDALITHDSLILSKQNTSDSGDAVTGEYRDKNTGYTVEFVGKGNEEQRWEFQVRHERIIWNTPTSRPGPDATGNTGFVERLYGGTIGESYEGVGTGGQCELS</sequence>
<name>EQX3_FUSHE</name>
<keyword id="KW-0413">Isomerase</keyword>
<gene>
    <name evidence="4" type="primary">eqx3</name>
</gene>
<proteinExistence type="inferred from homology"/>
<protein>
    <recommendedName>
        <fullName evidence="4">Diels-Alderase fsa2</fullName>
        <ecNumber evidence="6">5.5.1.-</ecNumber>
    </recommendedName>
    <alternativeName>
        <fullName evidence="4">Equisetin biosynthesis protein 3</fullName>
    </alternativeName>
</protein>
<dbReference type="EC" id="5.5.1.-" evidence="6"/>
<dbReference type="EMBL" id="KC439347">
    <property type="protein sequence ID" value="AGO86663.1"/>
    <property type="molecule type" value="Genomic_DNA"/>
</dbReference>
<dbReference type="SMR" id="S4W887"/>
<dbReference type="BioCyc" id="MetaCyc:MONOMER-21735"/>
<dbReference type="GO" id="GO:0016853">
    <property type="term" value="F:isomerase activity"/>
    <property type="evidence" value="ECO:0007669"/>
    <property type="project" value="UniProtKB-KW"/>
</dbReference>
<dbReference type="InterPro" id="IPR054499">
    <property type="entry name" value="DA_C"/>
</dbReference>
<dbReference type="Pfam" id="PF22903">
    <property type="entry name" value="DA_C"/>
    <property type="match status" value="1"/>
</dbReference>
<dbReference type="Pfam" id="PF24137">
    <property type="entry name" value="DA_N"/>
    <property type="match status" value="1"/>
</dbReference>
<feature type="chain" id="PRO_0000441293" description="Diels-Alderase fsa2">
    <location>
        <begin position="1"/>
        <end position="377"/>
    </location>
</feature>
<comment type="function">
    <text evidence="1 2 3">Diels-Alderase; part of the gene cluster that mediates the biosynthesis of equisetin, a trans-fused decalin-containing tetramic acid with antimicrobial activity (PubMed:23614392). The PKS module of eqxS together with the enoylreductase eqxC catalyze the formation of the polyketide unit which is then conjugated to L-serine by the condensation domain of the eqxS NRPS module (PubMed:23614392). Activity of the Dieckmann cyclase domain (RED) results in release of the Dieckmann product intermediate (PubMed:18652469, PubMed:23614392). Diels-Alderase eqx3 is involved in endo-selective Diels-Alder cycloaddition to form the decalin ring, leading to the production of N-desmethylequisetin also called trichosetin (By similarity). Subsequent N-methylation is carried out by eqxD to give equisetin (PubMed:23614392).</text>
</comment>
<comment type="catalytic activity">
    <reaction evidence="1">
        <text>(5S)-3-[(2E,6R,8E,10E,12E)-2,6-dimethyltetradeca-2,8,10,12-tetraenoyl]-5-(hydroxymethyl)pyrrolidine-2,4-dione = trichosetin</text>
        <dbReference type="Rhea" id="RHEA:67328"/>
        <dbReference type="ChEBI" id="CHEBI:142061"/>
        <dbReference type="ChEBI" id="CHEBI:169938"/>
    </reaction>
    <physiologicalReaction direction="left-to-right" evidence="1">
        <dbReference type="Rhea" id="RHEA:67329"/>
    </physiologicalReaction>
</comment>
<comment type="pathway">
    <text evidence="6">Mycotoxin biosynthesis.</text>
</comment>
<comment type="similarity">
    <text evidence="5">Belongs to the Diels-Alderase family.</text>
</comment>
<reference key="1">
    <citation type="journal article" date="2013" name="ACS Chem. Biol.">
        <title>Two related pyrrolidinedione synthetase loci in Fusarium heterosporum ATCC 74349 produce divergent metabolites.</title>
        <authorList>
            <person name="Kakule T.B."/>
            <person name="Sardar D."/>
            <person name="Lin Z."/>
            <person name="Schmidt E.W."/>
        </authorList>
    </citation>
    <scope>NUCLEOTIDE SEQUENCE [GENOMIC DNA]</scope>
    <scope>FUNCTION</scope>
    <scope>PATHWAY</scope>
    <source>
        <strain>ATCC 74349 / MF6069</strain>
    </source>
</reference>
<reference key="2">
    <citation type="journal article" date="2008" name="J. Am. Chem. Soc.">
        <title>Thioesterase-like role for fungal PKS-NRPS hybrid reductive domains.</title>
        <authorList>
            <person name="Sims J.W."/>
            <person name="Schmidt E.W."/>
        </authorList>
    </citation>
    <scope>FUNCTION</scope>
</reference>